<protein>
    <recommendedName>
        <fullName evidence="1">Porphobilinogen deaminase</fullName>
        <shortName evidence="1">PBG</shortName>
        <ecNumber evidence="1">2.5.1.61</ecNumber>
    </recommendedName>
    <alternativeName>
        <fullName evidence="1">Hydroxymethylbilane synthase</fullName>
        <shortName evidence="1">HMBS</shortName>
    </alternativeName>
    <alternativeName>
        <fullName evidence="1">Pre-uroporphyrinogen synthase</fullName>
    </alternativeName>
</protein>
<reference key="1">
    <citation type="submission" date="2006-08" db="EMBL/GenBank/DDBJ databases">
        <title>Complete sequence of Shewanella sp. MR-4.</title>
        <authorList>
            <consortium name="US DOE Joint Genome Institute"/>
            <person name="Copeland A."/>
            <person name="Lucas S."/>
            <person name="Lapidus A."/>
            <person name="Barry K."/>
            <person name="Detter J.C."/>
            <person name="Glavina del Rio T."/>
            <person name="Hammon N."/>
            <person name="Israni S."/>
            <person name="Dalin E."/>
            <person name="Tice H."/>
            <person name="Pitluck S."/>
            <person name="Kiss H."/>
            <person name="Brettin T."/>
            <person name="Bruce D."/>
            <person name="Han C."/>
            <person name="Tapia R."/>
            <person name="Gilna P."/>
            <person name="Schmutz J."/>
            <person name="Larimer F."/>
            <person name="Land M."/>
            <person name="Hauser L."/>
            <person name="Kyrpides N."/>
            <person name="Mikhailova N."/>
            <person name="Nealson K."/>
            <person name="Konstantinidis K."/>
            <person name="Klappenbach J."/>
            <person name="Tiedje J."/>
            <person name="Richardson P."/>
        </authorList>
    </citation>
    <scope>NUCLEOTIDE SEQUENCE [LARGE SCALE GENOMIC DNA]</scope>
    <source>
        <strain>MR-4</strain>
    </source>
</reference>
<comment type="function">
    <text evidence="1">Tetrapolymerization of the monopyrrole PBG into the hydroxymethylbilane pre-uroporphyrinogen in several discrete steps.</text>
</comment>
<comment type="catalytic activity">
    <reaction evidence="1">
        <text>4 porphobilinogen + H2O = hydroxymethylbilane + 4 NH4(+)</text>
        <dbReference type="Rhea" id="RHEA:13185"/>
        <dbReference type="ChEBI" id="CHEBI:15377"/>
        <dbReference type="ChEBI" id="CHEBI:28938"/>
        <dbReference type="ChEBI" id="CHEBI:57845"/>
        <dbReference type="ChEBI" id="CHEBI:58126"/>
        <dbReference type="EC" id="2.5.1.61"/>
    </reaction>
</comment>
<comment type="cofactor">
    <cofactor evidence="1">
        <name>dipyrromethane</name>
        <dbReference type="ChEBI" id="CHEBI:60342"/>
    </cofactor>
    <text evidence="1">Binds 1 dipyrromethane group covalently.</text>
</comment>
<comment type="pathway">
    <text evidence="1">Porphyrin-containing compound metabolism; protoporphyrin-IX biosynthesis; coproporphyrinogen-III from 5-aminolevulinate: step 2/4.</text>
</comment>
<comment type="subunit">
    <text evidence="1">Monomer.</text>
</comment>
<comment type="miscellaneous">
    <text evidence="1">The porphobilinogen subunits are added to the dipyrromethane group.</text>
</comment>
<comment type="similarity">
    <text evidence="1">Belongs to the HMBS family.</text>
</comment>
<feature type="chain" id="PRO_0000304273" description="Porphobilinogen deaminase">
    <location>
        <begin position="1"/>
        <end position="310"/>
    </location>
</feature>
<feature type="modified residue" description="S-(dipyrrolylmethanemethyl)cysteine" evidence="1">
    <location>
        <position position="242"/>
    </location>
</feature>
<name>HEM3_SHESM</name>
<dbReference type="EC" id="2.5.1.61" evidence="1"/>
<dbReference type="EMBL" id="CP000446">
    <property type="protein sequence ID" value="ABI37468.1"/>
    <property type="molecule type" value="Genomic_DNA"/>
</dbReference>
<dbReference type="RefSeq" id="WP_011621194.1">
    <property type="nucleotide sequence ID" value="NC_008321.1"/>
</dbReference>
<dbReference type="SMR" id="Q0HN99"/>
<dbReference type="KEGG" id="she:Shewmr4_0388"/>
<dbReference type="HOGENOM" id="CLU_019704_0_2_6"/>
<dbReference type="UniPathway" id="UPA00251">
    <property type="reaction ID" value="UER00319"/>
</dbReference>
<dbReference type="GO" id="GO:0005737">
    <property type="term" value="C:cytoplasm"/>
    <property type="evidence" value="ECO:0007669"/>
    <property type="project" value="TreeGrafter"/>
</dbReference>
<dbReference type="GO" id="GO:0004418">
    <property type="term" value="F:hydroxymethylbilane synthase activity"/>
    <property type="evidence" value="ECO:0007669"/>
    <property type="project" value="UniProtKB-UniRule"/>
</dbReference>
<dbReference type="GO" id="GO:0006782">
    <property type="term" value="P:protoporphyrinogen IX biosynthetic process"/>
    <property type="evidence" value="ECO:0007669"/>
    <property type="project" value="UniProtKB-UniRule"/>
</dbReference>
<dbReference type="CDD" id="cd13646">
    <property type="entry name" value="PBP2_EcHMBS_like"/>
    <property type="match status" value="1"/>
</dbReference>
<dbReference type="FunFam" id="3.30.160.40:FF:000002">
    <property type="entry name" value="Porphobilinogen deaminase"/>
    <property type="match status" value="1"/>
</dbReference>
<dbReference type="FunFam" id="3.40.190.10:FF:000004">
    <property type="entry name" value="Porphobilinogen deaminase"/>
    <property type="match status" value="1"/>
</dbReference>
<dbReference type="FunFam" id="3.40.190.10:FF:000005">
    <property type="entry name" value="Porphobilinogen deaminase"/>
    <property type="match status" value="1"/>
</dbReference>
<dbReference type="Gene3D" id="3.40.190.10">
    <property type="entry name" value="Periplasmic binding protein-like II"/>
    <property type="match status" value="2"/>
</dbReference>
<dbReference type="Gene3D" id="3.30.160.40">
    <property type="entry name" value="Porphobilinogen deaminase, C-terminal domain"/>
    <property type="match status" value="1"/>
</dbReference>
<dbReference type="HAMAP" id="MF_00260">
    <property type="entry name" value="Porphobil_deam"/>
    <property type="match status" value="1"/>
</dbReference>
<dbReference type="InterPro" id="IPR000860">
    <property type="entry name" value="HemC"/>
</dbReference>
<dbReference type="InterPro" id="IPR022419">
    <property type="entry name" value="Porphobilin_deaminase_cofac_BS"/>
</dbReference>
<dbReference type="InterPro" id="IPR022417">
    <property type="entry name" value="Porphobilin_deaminase_N"/>
</dbReference>
<dbReference type="InterPro" id="IPR022418">
    <property type="entry name" value="Porphobilinogen_deaminase_C"/>
</dbReference>
<dbReference type="InterPro" id="IPR036803">
    <property type="entry name" value="Porphobilinogen_deaminase_C_sf"/>
</dbReference>
<dbReference type="NCBIfam" id="TIGR00212">
    <property type="entry name" value="hemC"/>
    <property type="match status" value="1"/>
</dbReference>
<dbReference type="PANTHER" id="PTHR11557">
    <property type="entry name" value="PORPHOBILINOGEN DEAMINASE"/>
    <property type="match status" value="1"/>
</dbReference>
<dbReference type="PANTHER" id="PTHR11557:SF0">
    <property type="entry name" value="PORPHOBILINOGEN DEAMINASE"/>
    <property type="match status" value="1"/>
</dbReference>
<dbReference type="Pfam" id="PF01379">
    <property type="entry name" value="Porphobil_deam"/>
    <property type="match status" value="1"/>
</dbReference>
<dbReference type="Pfam" id="PF03900">
    <property type="entry name" value="Porphobil_deamC"/>
    <property type="match status" value="1"/>
</dbReference>
<dbReference type="PIRSF" id="PIRSF001438">
    <property type="entry name" value="4pyrrol_synth_OHMeBilane_synth"/>
    <property type="match status" value="1"/>
</dbReference>
<dbReference type="PRINTS" id="PR00151">
    <property type="entry name" value="PORPHBDMNASE"/>
</dbReference>
<dbReference type="SUPFAM" id="SSF53850">
    <property type="entry name" value="Periplasmic binding protein-like II"/>
    <property type="match status" value="1"/>
</dbReference>
<dbReference type="SUPFAM" id="SSF54782">
    <property type="entry name" value="Porphobilinogen deaminase (hydroxymethylbilane synthase), C-terminal domain"/>
    <property type="match status" value="1"/>
</dbReference>
<dbReference type="PROSITE" id="PS00533">
    <property type="entry name" value="PORPHOBILINOGEN_DEAM"/>
    <property type="match status" value="1"/>
</dbReference>
<sequence length="310" mass="33472">MSENRIRIATRKSPLAMWQAEFVKAELERVHPGIVVELLPMSTKGDVILDTPLAKVGGKGLFVKELEVAMLEDQADIAVHSMKDVPVDFPEGLGLEVICEREDPRDAFVSNLYKSISELPLGATVGTSSLRRQCQLRASRPDLIIKDLRGNVGTRLAKLDNGEYDAIILAAAGLIRLKLSERIASFISAEESLPANGQGAVGIECRTNDERVKALLAPLEHLETRYRVIAERAMNTRLEGGCQVPIGAFAEIHGDEMTLRGLVGNPDGSEIIEGVITGPKTEATKLGVALAEELLSKGAKSILDAVYAKA</sequence>
<evidence type="ECO:0000255" key="1">
    <source>
        <dbReference type="HAMAP-Rule" id="MF_00260"/>
    </source>
</evidence>
<organism>
    <name type="scientific">Shewanella sp. (strain MR-4)</name>
    <dbReference type="NCBI Taxonomy" id="60480"/>
    <lineage>
        <taxon>Bacteria</taxon>
        <taxon>Pseudomonadati</taxon>
        <taxon>Pseudomonadota</taxon>
        <taxon>Gammaproteobacteria</taxon>
        <taxon>Alteromonadales</taxon>
        <taxon>Shewanellaceae</taxon>
        <taxon>Shewanella</taxon>
    </lineage>
</organism>
<proteinExistence type="inferred from homology"/>
<keyword id="KW-0627">Porphyrin biosynthesis</keyword>
<keyword id="KW-0808">Transferase</keyword>
<accession>Q0HN99</accession>
<gene>
    <name evidence="1" type="primary">hemC</name>
    <name type="ordered locus">Shewmr4_0388</name>
</gene>